<keyword id="KW-0052">Apoplast</keyword>
<keyword id="KW-0186">Copper</keyword>
<keyword id="KW-0325">Glycoprotein</keyword>
<keyword id="KW-0439">Lignin degradation</keyword>
<keyword id="KW-0479">Metal-binding</keyword>
<keyword id="KW-0560">Oxidoreductase</keyword>
<keyword id="KW-1185">Reference proteome</keyword>
<keyword id="KW-0677">Repeat</keyword>
<keyword id="KW-0964">Secreted</keyword>
<keyword id="KW-0732">Signal</keyword>
<comment type="function">
    <text evidence="1">Lignin degradation and detoxification of lignin-derived products.</text>
</comment>
<comment type="catalytic activity">
    <reaction>
        <text>4 hydroquinone + O2 = 4 benzosemiquinone + 2 H2O</text>
        <dbReference type="Rhea" id="RHEA:11276"/>
        <dbReference type="ChEBI" id="CHEBI:15377"/>
        <dbReference type="ChEBI" id="CHEBI:15379"/>
        <dbReference type="ChEBI" id="CHEBI:17594"/>
        <dbReference type="ChEBI" id="CHEBI:17977"/>
        <dbReference type="EC" id="1.10.3.2"/>
    </reaction>
</comment>
<comment type="cofactor">
    <cofactor evidence="1">
        <name>Cu cation</name>
        <dbReference type="ChEBI" id="CHEBI:23378"/>
    </cofactor>
    <text evidence="1">Binds 4 Cu cations per monomer.</text>
</comment>
<comment type="subcellular location">
    <subcellularLocation>
        <location evidence="5">Secreted</location>
        <location evidence="5">Extracellular space</location>
        <location evidence="5">Apoplast</location>
    </subcellularLocation>
</comment>
<comment type="tissue specificity">
    <text evidence="3 4">Ubiquitous and constitutive.</text>
</comment>
<comment type="similarity">
    <text evidence="5">Belongs to the multicopper oxidase family.</text>
</comment>
<comment type="sequence caution" evidence="5">
    <conflict type="erroneous initiation">
        <sequence resource="EMBL-CDS" id="BAB08386"/>
    </conflict>
</comment>
<comment type="sequence caution" evidence="5">
    <conflict type="erroneous initiation">
        <sequence resource="EMBL-CDS" id="CAB86093"/>
    </conflict>
</comment>
<reference key="1">
    <citation type="journal article" date="1997" name="DNA Res.">
        <title>Structural analysis of Arabidopsis thaliana chromosome 5. I. Sequence features of the 1.6 Mb regions covered by twenty physically assigned P1 clones.</title>
        <authorList>
            <person name="Sato S."/>
            <person name="Kotani H."/>
            <person name="Nakamura Y."/>
            <person name="Kaneko T."/>
            <person name="Asamizu E."/>
            <person name="Fukami M."/>
            <person name="Miyajima N."/>
            <person name="Tabata S."/>
        </authorList>
    </citation>
    <scope>NUCLEOTIDE SEQUENCE [LARGE SCALE GENOMIC DNA]</scope>
    <source>
        <strain>cv. Columbia</strain>
    </source>
</reference>
<reference key="2">
    <citation type="journal article" date="2000" name="Nature">
        <title>Sequence and analysis of chromosome 5 of the plant Arabidopsis thaliana.</title>
        <authorList>
            <person name="Tabata S."/>
            <person name="Kaneko T."/>
            <person name="Nakamura Y."/>
            <person name="Kotani H."/>
            <person name="Kato T."/>
            <person name="Asamizu E."/>
            <person name="Miyajima N."/>
            <person name="Sasamoto S."/>
            <person name="Kimura T."/>
            <person name="Hosouchi T."/>
            <person name="Kawashima K."/>
            <person name="Kohara M."/>
            <person name="Matsumoto M."/>
            <person name="Matsuno A."/>
            <person name="Muraki A."/>
            <person name="Nakayama S."/>
            <person name="Nakazaki N."/>
            <person name="Naruo K."/>
            <person name="Okumura S."/>
            <person name="Shinpo S."/>
            <person name="Takeuchi C."/>
            <person name="Wada T."/>
            <person name="Watanabe A."/>
            <person name="Yamada M."/>
            <person name="Yasuda M."/>
            <person name="Sato S."/>
            <person name="de la Bastide M."/>
            <person name="Huang E."/>
            <person name="Spiegel L."/>
            <person name="Gnoj L."/>
            <person name="O'Shaughnessy A."/>
            <person name="Preston R."/>
            <person name="Habermann K."/>
            <person name="Murray J."/>
            <person name="Johnson D."/>
            <person name="Rohlfing T."/>
            <person name="Nelson J."/>
            <person name="Stoneking T."/>
            <person name="Pepin K."/>
            <person name="Spieth J."/>
            <person name="Sekhon M."/>
            <person name="Armstrong J."/>
            <person name="Becker M."/>
            <person name="Belter E."/>
            <person name="Cordum H."/>
            <person name="Cordes M."/>
            <person name="Courtney L."/>
            <person name="Courtney W."/>
            <person name="Dante M."/>
            <person name="Du H."/>
            <person name="Edwards J."/>
            <person name="Fryman J."/>
            <person name="Haakensen B."/>
            <person name="Lamar E."/>
            <person name="Latreille P."/>
            <person name="Leonard S."/>
            <person name="Meyer R."/>
            <person name="Mulvaney E."/>
            <person name="Ozersky P."/>
            <person name="Riley A."/>
            <person name="Strowmatt C."/>
            <person name="Wagner-McPherson C."/>
            <person name="Wollam A."/>
            <person name="Yoakum M."/>
            <person name="Bell M."/>
            <person name="Dedhia N."/>
            <person name="Parnell L."/>
            <person name="Shah R."/>
            <person name="Rodriguez M."/>
            <person name="Hoon See L."/>
            <person name="Vil D."/>
            <person name="Baker J."/>
            <person name="Kirchoff K."/>
            <person name="Toth K."/>
            <person name="King L."/>
            <person name="Bahret A."/>
            <person name="Miller B."/>
            <person name="Marra M.A."/>
            <person name="Martienssen R."/>
            <person name="McCombie W.R."/>
            <person name="Wilson R.K."/>
            <person name="Murphy G."/>
            <person name="Bancroft I."/>
            <person name="Volckaert G."/>
            <person name="Wambutt R."/>
            <person name="Duesterhoeft A."/>
            <person name="Stiekema W."/>
            <person name="Pohl T."/>
            <person name="Entian K.-D."/>
            <person name="Terryn N."/>
            <person name="Hartley N."/>
            <person name="Bent E."/>
            <person name="Johnson S."/>
            <person name="Langham S.-A."/>
            <person name="McCullagh B."/>
            <person name="Robben J."/>
            <person name="Grymonprez B."/>
            <person name="Zimmermann W."/>
            <person name="Ramsperger U."/>
            <person name="Wedler H."/>
            <person name="Balke K."/>
            <person name="Wedler E."/>
            <person name="Peters S."/>
            <person name="van Staveren M."/>
            <person name="Dirkse W."/>
            <person name="Mooijman P."/>
            <person name="Klein Lankhorst R."/>
            <person name="Weitzenegger T."/>
            <person name="Bothe G."/>
            <person name="Rose M."/>
            <person name="Hauf J."/>
            <person name="Berneiser S."/>
            <person name="Hempel S."/>
            <person name="Feldpausch M."/>
            <person name="Lamberth S."/>
            <person name="Villarroel R."/>
            <person name="Gielen J."/>
            <person name="Ardiles W."/>
            <person name="Bents O."/>
            <person name="Lemcke K."/>
            <person name="Kolesov G."/>
            <person name="Mayer K.F.X."/>
            <person name="Rudd S."/>
            <person name="Schoof H."/>
            <person name="Schueller C."/>
            <person name="Zaccaria P."/>
            <person name="Mewes H.-W."/>
            <person name="Bevan M."/>
            <person name="Fransz P.F."/>
        </authorList>
    </citation>
    <scope>NUCLEOTIDE SEQUENCE [LARGE SCALE GENOMIC DNA]</scope>
    <source>
        <strain>cv. Columbia</strain>
    </source>
</reference>
<reference key="3">
    <citation type="journal article" date="2017" name="Plant J.">
        <title>Araport11: a complete reannotation of the Arabidopsis thaliana reference genome.</title>
        <authorList>
            <person name="Cheng C.Y."/>
            <person name="Krishnakumar V."/>
            <person name="Chan A.P."/>
            <person name="Thibaud-Nissen F."/>
            <person name="Schobel S."/>
            <person name="Town C.D."/>
        </authorList>
    </citation>
    <scope>GENOME REANNOTATION</scope>
    <source>
        <strain>cv. Columbia</strain>
    </source>
</reference>
<reference key="4">
    <citation type="journal article" date="2003" name="Science">
        <title>Empirical analysis of transcriptional activity in the Arabidopsis genome.</title>
        <authorList>
            <person name="Yamada K."/>
            <person name="Lim J."/>
            <person name="Dale J.M."/>
            <person name="Chen H."/>
            <person name="Shinn P."/>
            <person name="Palm C.J."/>
            <person name="Southwick A.M."/>
            <person name="Wu H.C."/>
            <person name="Kim C.J."/>
            <person name="Nguyen M."/>
            <person name="Pham P.K."/>
            <person name="Cheuk R.F."/>
            <person name="Karlin-Newmann G."/>
            <person name="Liu S.X."/>
            <person name="Lam B."/>
            <person name="Sakano H."/>
            <person name="Wu T."/>
            <person name="Yu G."/>
            <person name="Miranda M."/>
            <person name="Quach H.L."/>
            <person name="Tripp M."/>
            <person name="Chang C.H."/>
            <person name="Lee J.M."/>
            <person name="Toriumi M.J."/>
            <person name="Chan M.M."/>
            <person name="Tang C.C."/>
            <person name="Onodera C.S."/>
            <person name="Deng J.M."/>
            <person name="Akiyama K."/>
            <person name="Ansari Y."/>
            <person name="Arakawa T."/>
            <person name="Banh J."/>
            <person name="Banno F."/>
            <person name="Bowser L."/>
            <person name="Brooks S.Y."/>
            <person name="Carninci P."/>
            <person name="Chao Q."/>
            <person name="Choy N."/>
            <person name="Enju A."/>
            <person name="Goldsmith A.D."/>
            <person name="Gurjal M."/>
            <person name="Hansen N.F."/>
            <person name="Hayashizaki Y."/>
            <person name="Johnson-Hopson C."/>
            <person name="Hsuan V.W."/>
            <person name="Iida K."/>
            <person name="Karnes M."/>
            <person name="Khan S."/>
            <person name="Koesema E."/>
            <person name="Ishida J."/>
            <person name="Jiang P.X."/>
            <person name="Jones T."/>
            <person name="Kawai J."/>
            <person name="Kamiya A."/>
            <person name="Meyers C."/>
            <person name="Nakajima M."/>
            <person name="Narusaka M."/>
            <person name="Seki M."/>
            <person name="Sakurai T."/>
            <person name="Satou M."/>
            <person name="Tamse R."/>
            <person name="Vaysberg M."/>
            <person name="Wallender E.K."/>
            <person name="Wong C."/>
            <person name="Yamamura Y."/>
            <person name="Yuan S."/>
            <person name="Shinozaki K."/>
            <person name="Davis R.W."/>
            <person name="Theologis A."/>
            <person name="Ecker J.R."/>
        </authorList>
    </citation>
    <scope>NUCLEOTIDE SEQUENCE [LARGE SCALE MRNA]</scope>
    <source>
        <strain>cv. Columbia</strain>
    </source>
</reference>
<reference key="5">
    <citation type="submission" date="2006-07" db="EMBL/GenBank/DDBJ databases">
        <title>Large-scale analysis of RIKEN Arabidopsis full-length (RAFL) cDNAs.</title>
        <authorList>
            <person name="Totoki Y."/>
            <person name="Seki M."/>
            <person name="Ishida J."/>
            <person name="Nakajima M."/>
            <person name="Enju A."/>
            <person name="Kamiya A."/>
            <person name="Narusaka M."/>
            <person name="Shin-i T."/>
            <person name="Nakagawa M."/>
            <person name="Sakamoto N."/>
            <person name="Oishi K."/>
            <person name="Kohara Y."/>
            <person name="Kobayashi M."/>
            <person name="Toyoda A."/>
            <person name="Sakaki Y."/>
            <person name="Sakurai T."/>
            <person name="Iida K."/>
            <person name="Akiyama K."/>
            <person name="Satou M."/>
            <person name="Toyoda T."/>
            <person name="Konagaya A."/>
            <person name="Carninci P."/>
            <person name="Kawai J."/>
            <person name="Hayashizaki Y."/>
            <person name="Shinozaki K."/>
        </authorList>
    </citation>
    <scope>NUCLEOTIDE SEQUENCE [LARGE SCALE MRNA] OF 219-557</scope>
    <source>
        <strain>cv. Columbia</strain>
    </source>
</reference>
<reference key="6">
    <citation type="journal article" date="2005" name="Planta">
        <title>Gene structure and molecular analysis of the laccase-like multicopper oxidase (LMCO) gene family in Arabidopsis thaliana.</title>
        <authorList>
            <person name="McCaig B.C."/>
            <person name="Meagher R.B."/>
            <person name="Dean J.F.D."/>
        </authorList>
    </citation>
    <scope>TISSUE SPECIFICITY</scope>
</reference>
<reference key="7">
    <citation type="journal article" date="2006" name="J. Exp. Bot.">
        <title>Mutant identification and characterization of the laccase gene family in Arabidopsis.</title>
        <authorList>
            <person name="Cai X."/>
            <person name="Davis E.J."/>
            <person name="Ballif J."/>
            <person name="Liang M."/>
            <person name="Bushman E."/>
            <person name="Haroldsen V."/>
            <person name="Torabinejad J."/>
            <person name="Wu Y."/>
        </authorList>
    </citation>
    <scope>TISSUE SPECIFICITY</scope>
</reference>
<protein>
    <recommendedName>
        <fullName>Laccase-11</fullName>
        <ecNumber>1.10.3.2</ecNumber>
    </recommendedName>
    <alternativeName>
        <fullName>Benzenediol:oxygen oxidoreductase 11</fullName>
    </alternativeName>
    <alternativeName>
        <fullName>Diphenol oxidase 11</fullName>
    </alternativeName>
    <alternativeName>
        <fullName>Urishiol oxidase 11</fullName>
    </alternativeName>
</protein>
<proteinExistence type="evidence at transcript level"/>
<gene>
    <name type="primary">LAC11</name>
    <name type="ordered locus">At5g03260</name>
    <name type="ORF">F15A17_290</name>
    <name type="ORF">MOK16.17</name>
</gene>
<feature type="signal peptide" evidence="2">
    <location>
        <begin position="1"/>
        <end position="23"/>
    </location>
</feature>
<feature type="chain" id="PRO_0000283639" description="Laccase-11">
    <location>
        <begin position="24"/>
        <end position="557"/>
    </location>
</feature>
<feature type="domain" description="Plastocyanin-like 1">
    <location>
        <begin position="31"/>
        <end position="147"/>
    </location>
</feature>
<feature type="domain" description="Plastocyanin-like 2">
    <location>
        <begin position="158"/>
        <end position="308"/>
    </location>
</feature>
<feature type="domain" description="Plastocyanin-like 3">
    <location>
        <begin position="406"/>
        <end position="541"/>
    </location>
</feature>
<feature type="binding site" description="type 2 copper site" evidence="1">
    <location>
        <position position="81"/>
    </location>
    <ligand>
        <name>Cu cation</name>
        <dbReference type="ChEBI" id="CHEBI:23378"/>
        <label>1</label>
    </ligand>
</feature>
<feature type="binding site" description="type 3 copper site" evidence="1">
    <location>
        <position position="83"/>
    </location>
    <ligand>
        <name>Cu cation</name>
        <dbReference type="ChEBI" id="CHEBI:23378"/>
        <label>2</label>
    </ligand>
</feature>
<feature type="binding site" description="type 3 copper site" evidence="1">
    <location>
        <position position="126"/>
    </location>
    <ligand>
        <name>Cu cation</name>
        <dbReference type="ChEBI" id="CHEBI:23378"/>
        <label>2</label>
    </ligand>
</feature>
<feature type="binding site" description="type 3 copper site" evidence="1">
    <location>
        <position position="128"/>
    </location>
    <ligand>
        <name>Cu cation</name>
        <dbReference type="ChEBI" id="CHEBI:23378"/>
        <label>3</label>
    </ligand>
</feature>
<feature type="binding site" description="type 1 copper site" evidence="1">
    <location>
        <position position="458"/>
    </location>
    <ligand>
        <name>Cu cation</name>
        <dbReference type="ChEBI" id="CHEBI:23378"/>
        <label>4</label>
    </ligand>
</feature>
<feature type="binding site" description="type 2 copper site" evidence="1">
    <location>
        <position position="461"/>
    </location>
    <ligand>
        <name>Cu cation</name>
        <dbReference type="ChEBI" id="CHEBI:23378"/>
        <label>1</label>
    </ligand>
</feature>
<feature type="binding site" description="type 3 copper site" evidence="1">
    <location>
        <position position="463"/>
    </location>
    <ligand>
        <name>Cu cation</name>
        <dbReference type="ChEBI" id="CHEBI:23378"/>
        <label>3</label>
    </ligand>
</feature>
<feature type="binding site" description="type 3 copper site" evidence="1">
    <location>
        <position position="520"/>
    </location>
    <ligand>
        <name>Cu cation</name>
        <dbReference type="ChEBI" id="CHEBI:23378"/>
        <label>3</label>
    </ligand>
</feature>
<feature type="binding site" description="type 1 copper site" evidence="1">
    <location>
        <position position="521"/>
    </location>
    <ligand>
        <name>Cu cation</name>
        <dbReference type="ChEBI" id="CHEBI:23378"/>
        <label>4</label>
    </ligand>
</feature>
<feature type="binding site" description="type 3 copper site" evidence="1">
    <location>
        <position position="522"/>
    </location>
    <ligand>
        <name>Cu cation</name>
        <dbReference type="ChEBI" id="CHEBI:23378"/>
        <label>2</label>
    </ligand>
</feature>
<feature type="binding site" description="type 1 copper site" evidence="1">
    <location>
        <position position="526"/>
    </location>
    <ligand>
        <name>Cu cation</name>
        <dbReference type="ChEBI" id="CHEBI:23378"/>
        <label>4</label>
    </ligand>
</feature>
<feature type="glycosylation site" description="N-linked (GlcNAc...) asparagine" evidence="2">
    <location>
        <position position="36"/>
    </location>
</feature>
<feature type="glycosylation site" description="N-linked (GlcNAc...) asparagine" evidence="2">
    <location>
        <position position="69"/>
    </location>
</feature>
<feature type="glycosylation site" description="N-linked (GlcNAc...) asparagine" evidence="2">
    <location>
        <position position="77"/>
    </location>
</feature>
<feature type="glycosylation site" description="N-linked (GlcNAc...) asparagine" evidence="2">
    <location>
        <position position="115"/>
    </location>
</feature>
<feature type="glycosylation site" description="N-linked (GlcNAc...) asparagine" evidence="2">
    <location>
        <position position="240"/>
    </location>
</feature>
<feature type="glycosylation site" description="N-linked (GlcNAc...) asparagine" evidence="2">
    <location>
        <position position="296"/>
    </location>
</feature>
<feature type="glycosylation site" description="N-linked (GlcNAc...) asparagine" evidence="2">
    <location>
        <position position="323"/>
    </location>
</feature>
<feature type="glycosylation site" description="N-linked (GlcNAc...) asparagine" evidence="2">
    <location>
        <position position="371"/>
    </location>
</feature>
<feature type="glycosylation site" description="N-linked (GlcNAc...) asparagine" evidence="2">
    <location>
        <position position="381"/>
    </location>
</feature>
<feature type="glycosylation site" description="N-linked (GlcNAc...) asparagine" evidence="2">
    <location>
        <position position="398"/>
    </location>
</feature>
<feature type="glycosylation site" description="N-linked (GlcNAc...) asparagine" evidence="2">
    <location>
        <position position="416"/>
    </location>
</feature>
<feature type="glycosylation site" description="N-linked (GlcNAc...) asparagine" evidence="2">
    <location>
        <position position="440"/>
    </location>
</feature>
<evidence type="ECO:0000250" key="1"/>
<evidence type="ECO:0000255" key="2"/>
<evidence type="ECO:0000269" key="3">
    <source>
    </source>
</evidence>
<evidence type="ECO:0000269" key="4">
    <source>
    </source>
</evidence>
<evidence type="ECO:0000305" key="5"/>
<organism>
    <name type="scientific">Arabidopsis thaliana</name>
    <name type="common">Mouse-ear cress</name>
    <dbReference type="NCBI Taxonomy" id="3702"/>
    <lineage>
        <taxon>Eukaryota</taxon>
        <taxon>Viridiplantae</taxon>
        <taxon>Streptophyta</taxon>
        <taxon>Embryophyta</taxon>
        <taxon>Tracheophyta</taxon>
        <taxon>Spermatophyta</taxon>
        <taxon>Magnoliopsida</taxon>
        <taxon>eudicotyledons</taxon>
        <taxon>Gunneridae</taxon>
        <taxon>Pentapetalae</taxon>
        <taxon>rosids</taxon>
        <taxon>malvids</taxon>
        <taxon>Brassicales</taxon>
        <taxon>Brassicaceae</taxon>
        <taxon>Camelineae</taxon>
        <taxon>Arabidopsis</taxon>
    </lineage>
</organism>
<dbReference type="EC" id="1.10.3.2"/>
<dbReference type="EMBL" id="AB005240">
    <property type="protein sequence ID" value="BAB08386.1"/>
    <property type="status" value="ALT_INIT"/>
    <property type="molecule type" value="Genomic_DNA"/>
</dbReference>
<dbReference type="EMBL" id="AL163002">
    <property type="protein sequence ID" value="CAB86093.1"/>
    <property type="status" value="ALT_INIT"/>
    <property type="molecule type" value="Genomic_DNA"/>
</dbReference>
<dbReference type="EMBL" id="CP002688">
    <property type="protein sequence ID" value="AED90578.1"/>
    <property type="molecule type" value="Genomic_DNA"/>
</dbReference>
<dbReference type="EMBL" id="AY065128">
    <property type="protein sequence ID" value="AAL38304.1"/>
    <property type="molecule type" value="mRNA"/>
</dbReference>
<dbReference type="EMBL" id="AY081592">
    <property type="protein sequence ID" value="AAM10154.1"/>
    <property type="molecule type" value="mRNA"/>
</dbReference>
<dbReference type="EMBL" id="AK229950">
    <property type="protein sequence ID" value="BAF01776.1"/>
    <property type="molecule type" value="mRNA"/>
</dbReference>
<dbReference type="PIR" id="T48347">
    <property type="entry name" value="T48347"/>
</dbReference>
<dbReference type="RefSeq" id="NP_195946.2">
    <property type="nucleotide sequence ID" value="NM_120404.3"/>
</dbReference>
<dbReference type="SMR" id="Q8VZA1"/>
<dbReference type="BioGRID" id="17163">
    <property type="interactions" value="3"/>
</dbReference>
<dbReference type="FunCoup" id="Q8VZA1">
    <property type="interactions" value="79"/>
</dbReference>
<dbReference type="IntAct" id="Q8VZA1">
    <property type="interactions" value="1"/>
</dbReference>
<dbReference type="STRING" id="3702.Q8VZA1"/>
<dbReference type="GlyCosmos" id="Q8VZA1">
    <property type="glycosylation" value="12 sites, No reported glycans"/>
</dbReference>
<dbReference type="GlyGen" id="Q8VZA1">
    <property type="glycosylation" value="12 sites"/>
</dbReference>
<dbReference type="PaxDb" id="3702-AT5G03260.1"/>
<dbReference type="ProteomicsDB" id="250769"/>
<dbReference type="EnsemblPlants" id="AT5G03260.1">
    <property type="protein sequence ID" value="AT5G03260.1"/>
    <property type="gene ID" value="AT5G03260"/>
</dbReference>
<dbReference type="GeneID" id="831887"/>
<dbReference type="Gramene" id="AT5G03260.1">
    <property type="protein sequence ID" value="AT5G03260.1"/>
    <property type="gene ID" value="AT5G03260"/>
</dbReference>
<dbReference type="KEGG" id="ath:AT5G03260"/>
<dbReference type="Araport" id="AT5G03260"/>
<dbReference type="TAIR" id="AT5G03260">
    <property type="gene designation" value="LAC11"/>
</dbReference>
<dbReference type="eggNOG" id="KOG1263">
    <property type="taxonomic scope" value="Eukaryota"/>
</dbReference>
<dbReference type="HOGENOM" id="CLU_006504_6_3_1"/>
<dbReference type="InParanoid" id="Q8VZA1"/>
<dbReference type="OMA" id="VQYNMSI"/>
<dbReference type="OrthoDB" id="2121828at2759"/>
<dbReference type="PhylomeDB" id="Q8VZA1"/>
<dbReference type="BioCyc" id="ARA:AT5G03260-MONOMER"/>
<dbReference type="PRO" id="PR:Q8VZA1"/>
<dbReference type="Proteomes" id="UP000006548">
    <property type="component" value="Chromosome 5"/>
</dbReference>
<dbReference type="ExpressionAtlas" id="Q8VZA1">
    <property type="expression patterns" value="baseline and differential"/>
</dbReference>
<dbReference type="GO" id="GO:0048046">
    <property type="term" value="C:apoplast"/>
    <property type="evidence" value="ECO:0007669"/>
    <property type="project" value="UniProtKB-SubCell"/>
</dbReference>
<dbReference type="GO" id="GO:0005507">
    <property type="term" value="F:copper ion binding"/>
    <property type="evidence" value="ECO:0007669"/>
    <property type="project" value="InterPro"/>
</dbReference>
<dbReference type="GO" id="GO:0052716">
    <property type="term" value="F:hydroquinone:oxygen oxidoreductase activity"/>
    <property type="evidence" value="ECO:0007669"/>
    <property type="project" value="UniProtKB-EC"/>
</dbReference>
<dbReference type="GO" id="GO:0009809">
    <property type="term" value="P:lignin biosynthetic process"/>
    <property type="evidence" value="ECO:0000316"/>
    <property type="project" value="TAIR"/>
</dbReference>
<dbReference type="GO" id="GO:0046274">
    <property type="term" value="P:lignin catabolic process"/>
    <property type="evidence" value="ECO:0007669"/>
    <property type="project" value="UniProtKB-KW"/>
</dbReference>
<dbReference type="CDD" id="cd13849">
    <property type="entry name" value="CuRO_1_LCC_plant"/>
    <property type="match status" value="1"/>
</dbReference>
<dbReference type="CDD" id="cd13875">
    <property type="entry name" value="CuRO_2_LCC_plant"/>
    <property type="match status" value="1"/>
</dbReference>
<dbReference type="CDD" id="cd13897">
    <property type="entry name" value="CuRO_3_LCC_plant"/>
    <property type="match status" value="1"/>
</dbReference>
<dbReference type="FunFam" id="2.60.40.420:FF:000049">
    <property type="entry name" value="Laccase"/>
    <property type="match status" value="1"/>
</dbReference>
<dbReference type="FunFam" id="2.60.40.420:FF:000053">
    <property type="entry name" value="Laccase"/>
    <property type="match status" value="1"/>
</dbReference>
<dbReference type="FunFam" id="2.60.40.420:FF:000062">
    <property type="entry name" value="Laccase"/>
    <property type="match status" value="1"/>
</dbReference>
<dbReference type="Gene3D" id="2.60.40.420">
    <property type="entry name" value="Cupredoxins - blue copper proteins"/>
    <property type="match status" value="3"/>
</dbReference>
<dbReference type="InterPro" id="IPR011707">
    <property type="entry name" value="Cu-oxidase-like_N"/>
</dbReference>
<dbReference type="InterPro" id="IPR001117">
    <property type="entry name" value="Cu-oxidase_2nd"/>
</dbReference>
<dbReference type="InterPro" id="IPR011706">
    <property type="entry name" value="Cu-oxidase_C"/>
</dbReference>
<dbReference type="InterPro" id="IPR045087">
    <property type="entry name" value="Cu-oxidase_fam"/>
</dbReference>
<dbReference type="InterPro" id="IPR033138">
    <property type="entry name" value="Cu_oxidase_CS"/>
</dbReference>
<dbReference type="InterPro" id="IPR002355">
    <property type="entry name" value="Cu_oxidase_Cu_BS"/>
</dbReference>
<dbReference type="InterPro" id="IPR008972">
    <property type="entry name" value="Cupredoxin"/>
</dbReference>
<dbReference type="InterPro" id="IPR034288">
    <property type="entry name" value="CuRO_1_LCC"/>
</dbReference>
<dbReference type="InterPro" id="IPR034285">
    <property type="entry name" value="CuRO_2_LCC"/>
</dbReference>
<dbReference type="InterPro" id="IPR034289">
    <property type="entry name" value="CuRO_3_LCC"/>
</dbReference>
<dbReference type="InterPro" id="IPR017761">
    <property type="entry name" value="Laccase"/>
</dbReference>
<dbReference type="NCBIfam" id="TIGR03389">
    <property type="entry name" value="laccase"/>
    <property type="match status" value="1"/>
</dbReference>
<dbReference type="PANTHER" id="PTHR11709:SF207">
    <property type="entry name" value="LACCASE-11"/>
    <property type="match status" value="1"/>
</dbReference>
<dbReference type="PANTHER" id="PTHR11709">
    <property type="entry name" value="MULTI-COPPER OXIDASE"/>
    <property type="match status" value="1"/>
</dbReference>
<dbReference type="Pfam" id="PF00394">
    <property type="entry name" value="Cu-oxidase"/>
    <property type="match status" value="1"/>
</dbReference>
<dbReference type="Pfam" id="PF07731">
    <property type="entry name" value="Cu-oxidase_2"/>
    <property type="match status" value="1"/>
</dbReference>
<dbReference type="Pfam" id="PF07732">
    <property type="entry name" value="Cu-oxidase_3"/>
    <property type="match status" value="1"/>
</dbReference>
<dbReference type="SUPFAM" id="SSF49503">
    <property type="entry name" value="Cupredoxins"/>
    <property type="match status" value="3"/>
</dbReference>
<dbReference type="PROSITE" id="PS00079">
    <property type="entry name" value="MULTICOPPER_OXIDASE1"/>
    <property type="match status" value="1"/>
</dbReference>
<dbReference type="PROSITE" id="PS00080">
    <property type="entry name" value="MULTICOPPER_OXIDASE2"/>
    <property type="match status" value="1"/>
</dbReference>
<name>LAC11_ARATH</name>
<accession>Q8VZA1</accession>
<accession>Q0WM80</accession>
<accession>Q9LYV9</accession>
<sequence length="557" mass="61748">MKMGFLFLFCYLLAFLGYSPVDAAVKKYQFDVQVKNISRICNAKPIVTVNGMFPGPTVYAREGDRVIINVTNHVQYNMSIHWHGLKQYRNGWADGPAYITQCPIQTGQSYLYDFNVTGQRGTLWWHAHILWLRATVYGAIVILPAPGKPYPFPQPYQESNIILGEWWNKDVETAVNQANQLGAPPPMSDAHTINGKPGPLFPCSEKHTFVIEAEAGKTYLLRIINAALNDELFFGIAGHNMTVVEIDAVYTKPFTTKAILLGPGQTTNVLVKTDRSPNRYFMAASPFMDAPVSVDNKTVTAILQYKGVPNTVLPILPKLPLPNDTSFALDYNGKLKSLNTPNFPALVPLKVDRRLFYTIGLGINACPTCVNGTNLAASINNITFIMPKTALLKAHYSNISGVFRTDFPDRPPKAFNYTGVPLTANLGTSTGTRLSRVKFNTTIELVLQDTNLLTVESHPFHLHGYNFFVVGTGVGNFDPKKDPAKFNLVDPPERNTVGVPTGGWAAIRFRADNPGVWFMHCHLEVHTMWGLKMAFVVENGETPELSVLPPPKDYPSC</sequence>